<comment type="function">
    <text evidence="1">Catalyzes the conversion of (8S)-3',8-cyclo-7,8-dihydroguanosine 5'-triphosphate to cyclic pyranopterin monophosphate (cPMP).</text>
</comment>
<comment type="catalytic activity">
    <reaction evidence="1">
        <text>(8S)-3',8-cyclo-7,8-dihydroguanosine 5'-triphosphate = cyclic pyranopterin phosphate + diphosphate</text>
        <dbReference type="Rhea" id="RHEA:49580"/>
        <dbReference type="ChEBI" id="CHEBI:33019"/>
        <dbReference type="ChEBI" id="CHEBI:59648"/>
        <dbReference type="ChEBI" id="CHEBI:131766"/>
        <dbReference type="EC" id="4.6.1.17"/>
    </reaction>
</comment>
<comment type="pathway">
    <text evidence="1">Cofactor biosynthesis; molybdopterin biosynthesis.</text>
</comment>
<comment type="subunit">
    <text evidence="1">Homohexamer; trimer of dimers.</text>
</comment>
<comment type="similarity">
    <text evidence="1">Belongs to the MoaC family.</text>
</comment>
<reference key="1">
    <citation type="journal article" date="1999" name="Genetics">
        <title>Multiple chromosomes in bacteria. The yin and yang of trp gene localization in Rhodobacter sphaeroides 2.4.1.</title>
        <authorList>
            <person name="Mackenzie C."/>
            <person name="Simmons A.E."/>
            <person name="Kaplan S."/>
        </authorList>
    </citation>
    <scope>NUCLEOTIDE SEQUENCE [GENOMIC DNA]</scope>
</reference>
<reference key="2">
    <citation type="submission" date="2005-09" db="EMBL/GenBank/DDBJ databases">
        <title>Complete sequence of chromosome 1 of Rhodobacter sphaeroides 2.4.1.</title>
        <authorList>
            <person name="Copeland A."/>
            <person name="Lucas S."/>
            <person name="Lapidus A."/>
            <person name="Barry K."/>
            <person name="Detter J.C."/>
            <person name="Glavina T."/>
            <person name="Hammon N."/>
            <person name="Israni S."/>
            <person name="Pitluck S."/>
            <person name="Richardson P."/>
            <person name="Mackenzie C."/>
            <person name="Choudhary M."/>
            <person name="Larimer F."/>
            <person name="Hauser L.J."/>
            <person name="Land M."/>
            <person name="Donohue T.J."/>
            <person name="Kaplan S."/>
        </authorList>
    </citation>
    <scope>NUCLEOTIDE SEQUENCE [LARGE SCALE GENOMIC DNA]</scope>
    <source>
        <strain>ATCC 17023 / DSM 158 / JCM 6121 / CCUG 31486 / LMG 2827 / NBRC 12203 / NCIMB 8253 / ATH 2.4.1.</strain>
    </source>
</reference>
<name>MOAC_CERS4</name>
<protein>
    <recommendedName>
        <fullName evidence="1">Cyclic pyranopterin monophosphate synthase</fullName>
        <ecNumber evidence="1">4.6.1.17</ecNumber>
    </recommendedName>
    <alternativeName>
        <fullName evidence="1">Molybdenum cofactor biosynthesis protein C</fullName>
    </alternativeName>
</protein>
<organism>
    <name type="scientific">Cereibacter sphaeroides (strain ATCC 17023 / DSM 158 / JCM 6121 / CCUG 31486 / LMG 2827 / NBRC 12203 / NCIMB 8253 / ATH 2.4.1.)</name>
    <name type="common">Rhodobacter sphaeroides</name>
    <dbReference type="NCBI Taxonomy" id="272943"/>
    <lineage>
        <taxon>Bacteria</taxon>
        <taxon>Pseudomonadati</taxon>
        <taxon>Pseudomonadota</taxon>
        <taxon>Alphaproteobacteria</taxon>
        <taxon>Rhodobacterales</taxon>
        <taxon>Paracoccaceae</taxon>
        <taxon>Cereibacter</taxon>
    </lineage>
</organism>
<gene>
    <name evidence="1" type="primary">moaC</name>
    <name type="ordered locus">RHOS4_05810</name>
    <name type="ORF">RSP_2000</name>
</gene>
<keyword id="KW-0456">Lyase</keyword>
<keyword id="KW-0501">Molybdenum cofactor biosynthesis</keyword>
<keyword id="KW-1185">Reference proteome</keyword>
<sequence>MSGLTHFDESGRAHMVDVSEKPVTARVAVARGAVKMSAETLALVTEGRAEKGDVLGVARLAGIMGAKRTADLIPLCHPLPITKVALELTADPALPGVVVEATVKTGGQTGVEMEALTAVSVACLTIYDMVKAVEKGMEITGIRLLLKEGGKSGRFEASA</sequence>
<evidence type="ECO:0000255" key="1">
    <source>
        <dbReference type="HAMAP-Rule" id="MF_01224"/>
    </source>
</evidence>
<feature type="chain" id="PRO_0000097824" description="Cyclic pyranopterin monophosphate synthase">
    <location>
        <begin position="1"/>
        <end position="159"/>
    </location>
</feature>
<feature type="active site" evidence="1">
    <location>
        <position position="128"/>
    </location>
</feature>
<feature type="binding site" evidence="1">
    <location>
        <begin position="75"/>
        <end position="77"/>
    </location>
    <ligand>
        <name>substrate</name>
    </ligand>
</feature>
<feature type="binding site" evidence="1">
    <location>
        <begin position="113"/>
        <end position="114"/>
    </location>
    <ligand>
        <name>substrate</name>
    </ligand>
</feature>
<proteinExistence type="inferred from homology"/>
<accession>Q9ZFA6</accession>
<accession>Q3J4Y5</accession>
<dbReference type="EC" id="4.6.1.17" evidence="1"/>
<dbReference type="EMBL" id="AF108766">
    <property type="protein sequence ID" value="AAD09120.1"/>
    <property type="molecule type" value="Genomic_DNA"/>
</dbReference>
<dbReference type="EMBL" id="CP000143">
    <property type="protein sequence ID" value="ABA78149.1"/>
    <property type="molecule type" value="Genomic_DNA"/>
</dbReference>
<dbReference type="PIR" id="T46857">
    <property type="entry name" value="T46857"/>
</dbReference>
<dbReference type="RefSeq" id="WP_002719152.1">
    <property type="nucleotide sequence ID" value="NZ_CP030271.1"/>
</dbReference>
<dbReference type="RefSeq" id="YP_352050.1">
    <property type="nucleotide sequence ID" value="NC_007493.2"/>
</dbReference>
<dbReference type="SMR" id="Q9ZFA6"/>
<dbReference type="STRING" id="272943.RSP_2000"/>
<dbReference type="EnsemblBacteria" id="ABA78149">
    <property type="protein sequence ID" value="ABA78149"/>
    <property type="gene ID" value="RSP_2000"/>
</dbReference>
<dbReference type="GeneID" id="67445780"/>
<dbReference type="KEGG" id="rsp:RSP_2000"/>
<dbReference type="PATRIC" id="fig|272943.9.peg.888"/>
<dbReference type="eggNOG" id="COG0315">
    <property type="taxonomic scope" value="Bacteria"/>
</dbReference>
<dbReference type="OrthoDB" id="9794429at2"/>
<dbReference type="PhylomeDB" id="Q9ZFA6"/>
<dbReference type="UniPathway" id="UPA00344"/>
<dbReference type="Proteomes" id="UP000002703">
    <property type="component" value="Chromosome 1"/>
</dbReference>
<dbReference type="GO" id="GO:0061799">
    <property type="term" value="F:cyclic pyranopterin monophosphate synthase activity"/>
    <property type="evidence" value="ECO:0007669"/>
    <property type="project" value="UniProtKB-UniRule"/>
</dbReference>
<dbReference type="GO" id="GO:0006777">
    <property type="term" value="P:Mo-molybdopterin cofactor biosynthetic process"/>
    <property type="evidence" value="ECO:0007669"/>
    <property type="project" value="UniProtKB-UniRule"/>
</dbReference>
<dbReference type="CDD" id="cd01420">
    <property type="entry name" value="MoaC_PE"/>
    <property type="match status" value="1"/>
</dbReference>
<dbReference type="Gene3D" id="3.30.70.640">
    <property type="entry name" value="Molybdopterin cofactor biosynthesis C (MoaC) domain"/>
    <property type="match status" value="1"/>
</dbReference>
<dbReference type="HAMAP" id="MF_01224_B">
    <property type="entry name" value="MoaC_B"/>
    <property type="match status" value="1"/>
</dbReference>
<dbReference type="InterPro" id="IPR023045">
    <property type="entry name" value="MoaC"/>
</dbReference>
<dbReference type="InterPro" id="IPR047594">
    <property type="entry name" value="MoaC_bact/euk"/>
</dbReference>
<dbReference type="InterPro" id="IPR036522">
    <property type="entry name" value="MoaC_sf"/>
</dbReference>
<dbReference type="InterPro" id="IPR050105">
    <property type="entry name" value="MoCo_biosynth_MoaA/MoaC"/>
</dbReference>
<dbReference type="InterPro" id="IPR002820">
    <property type="entry name" value="Mopterin_CF_biosynth-C_dom"/>
</dbReference>
<dbReference type="NCBIfam" id="TIGR00581">
    <property type="entry name" value="moaC"/>
    <property type="match status" value="1"/>
</dbReference>
<dbReference type="NCBIfam" id="NF006870">
    <property type="entry name" value="PRK09364.1"/>
    <property type="match status" value="1"/>
</dbReference>
<dbReference type="PANTHER" id="PTHR22960:SF29">
    <property type="entry name" value="CYCLIC PYRANOPTERIN MONOPHOSPHATE SYNTHASE"/>
    <property type="match status" value="1"/>
</dbReference>
<dbReference type="PANTHER" id="PTHR22960">
    <property type="entry name" value="MOLYBDOPTERIN COFACTOR SYNTHESIS PROTEIN A"/>
    <property type="match status" value="1"/>
</dbReference>
<dbReference type="Pfam" id="PF01967">
    <property type="entry name" value="MoaC"/>
    <property type="match status" value="1"/>
</dbReference>
<dbReference type="SUPFAM" id="SSF55040">
    <property type="entry name" value="Molybdenum cofactor biosynthesis protein C, MoaC"/>
    <property type="match status" value="1"/>
</dbReference>